<accession>Q0SM65</accession>
<accession>G0IRW9</accession>
<protein>
    <recommendedName>
        <fullName evidence="1">Peptidyl-tRNA hydrolase</fullName>
        <shortName evidence="1">Pth</shortName>
        <ecNumber evidence="1">3.1.1.29</ecNumber>
    </recommendedName>
</protein>
<sequence>MGLLILGLGNPGLEFSLTRHNVGFSLLDKIVSKNGLFLKRKKKYEYSELRVISRRVILVKPLTYMNLSGSLFPSIFSDFYMCIKNLLVVLDNVDLPLGKCRLKERGGMSTHNGLKSISSVLGSSNYSRLYIGVGSNVMRDIKSFVLSRFCKDEIDRLEKLYDFLSDELIDISESNFKDKVQKINSSNF</sequence>
<dbReference type="EC" id="3.1.1.29" evidence="1"/>
<dbReference type="EMBL" id="CP000395">
    <property type="protein sequence ID" value="ABH02063.1"/>
    <property type="molecule type" value="Genomic_DNA"/>
</dbReference>
<dbReference type="EMBL" id="CP002933">
    <property type="protein sequence ID" value="AEL70004.1"/>
    <property type="molecule type" value="Genomic_DNA"/>
</dbReference>
<dbReference type="RefSeq" id="WP_004789566.1">
    <property type="nucleotide sequence ID" value="NZ_CP160066.1"/>
</dbReference>
<dbReference type="SMR" id="Q0SM65"/>
<dbReference type="STRING" id="29518.BLA32_00285"/>
<dbReference type="GeneID" id="77265643"/>
<dbReference type="KEGG" id="baf:BAPKO_0839"/>
<dbReference type="KEGG" id="bafz:BafPKo_0815"/>
<dbReference type="PATRIC" id="fig|390236.22.peg.776"/>
<dbReference type="eggNOG" id="COG0193">
    <property type="taxonomic scope" value="Bacteria"/>
</dbReference>
<dbReference type="HOGENOM" id="CLU_062456_4_1_12"/>
<dbReference type="OrthoDB" id="9800507at2"/>
<dbReference type="Proteomes" id="UP000005216">
    <property type="component" value="Chromosome"/>
</dbReference>
<dbReference type="GO" id="GO:0005737">
    <property type="term" value="C:cytoplasm"/>
    <property type="evidence" value="ECO:0007669"/>
    <property type="project" value="UniProtKB-SubCell"/>
</dbReference>
<dbReference type="GO" id="GO:0004045">
    <property type="term" value="F:peptidyl-tRNA hydrolase activity"/>
    <property type="evidence" value="ECO:0007669"/>
    <property type="project" value="UniProtKB-UniRule"/>
</dbReference>
<dbReference type="GO" id="GO:0000049">
    <property type="term" value="F:tRNA binding"/>
    <property type="evidence" value="ECO:0007669"/>
    <property type="project" value="UniProtKB-UniRule"/>
</dbReference>
<dbReference type="GO" id="GO:0006515">
    <property type="term" value="P:protein quality control for misfolded or incompletely synthesized proteins"/>
    <property type="evidence" value="ECO:0007669"/>
    <property type="project" value="UniProtKB-UniRule"/>
</dbReference>
<dbReference type="GO" id="GO:0072344">
    <property type="term" value="P:rescue of stalled ribosome"/>
    <property type="evidence" value="ECO:0007669"/>
    <property type="project" value="UniProtKB-UniRule"/>
</dbReference>
<dbReference type="CDD" id="cd00462">
    <property type="entry name" value="PTH"/>
    <property type="match status" value="1"/>
</dbReference>
<dbReference type="Gene3D" id="3.40.50.1470">
    <property type="entry name" value="Peptidyl-tRNA hydrolase"/>
    <property type="match status" value="1"/>
</dbReference>
<dbReference type="HAMAP" id="MF_00083">
    <property type="entry name" value="Pept_tRNA_hydro_bact"/>
    <property type="match status" value="1"/>
</dbReference>
<dbReference type="InterPro" id="IPR001328">
    <property type="entry name" value="Pept_tRNA_hydro"/>
</dbReference>
<dbReference type="InterPro" id="IPR018171">
    <property type="entry name" value="Pept_tRNA_hydro_CS"/>
</dbReference>
<dbReference type="InterPro" id="IPR036416">
    <property type="entry name" value="Pept_tRNA_hydro_sf"/>
</dbReference>
<dbReference type="NCBIfam" id="TIGR00447">
    <property type="entry name" value="pth"/>
    <property type="match status" value="1"/>
</dbReference>
<dbReference type="PANTHER" id="PTHR17224">
    <property type="entry name" value="PEPTIDYL-TRNA HYDROLASE"/>
    <property type="match status" value="1"/>
</dbReference>
<dbReference type="PANTHER" id="PTHR17224:SF1">
    <property type="entry name" value="PEPTIDYL-TRNA HYDROLASE"/>
    <property type="match status" value="1"/>
</dbReference>
<dbReference type="Pfam" id="PF01195">
    <property type="entry name" value="Pept_tRNA_hydro"/>
    <property type="match status" value="1"/>
</dbReference>
<dbReference type="SUPFAM" id="SSF53178">
    <property type="entry name" value="Peptidyl-tRNA hydrolase-like"/>
    <property type="match status" value="1"/>
</dbReference>
<dbReference type="PROSITE" id="PS01195">
    <property type="entry name" value="PEPT_TRNA_HYDROL_1"/>
    <property type="match status" value="1"/>
</dbReference>
<dbReference type="PROSITE" id="PS01196">
    <property type="entry name" value="PEPT_TRNA_HYDROL_2"/>
    <property type="match status" value="1"/>
</dbReference>
<gene>
    <name evidence="1" type="primary">pth</name>
    <name type="ordered locus">BAPKO_0839</name>
    <name type="ordered locus">BafPKo_0815</name>
</gene>
<reference key="1">
    <citation type="journal article" date="2006" name="BMC Genomics">
        <title>Comparative genome analysis: selection pressure on the Borrelia vls cassettes is essential for infectivity.</title>
        <authorList>
            <person name="Gloeckner G."/>
            <person name="Schulte-Spechtel U."/>
            <person name="Schilhabel M."/>
            <person name="Felder M."/>
            <person name="Suehnel J."/>
            <person name="Wilske B."/>
            <person name="Platzer M."/>
        </authorList>
    </citation>
    <scope>NUCLEOTIDE SEQUENCE [LARGE SCALE GENOMIC DNA]</scope>
    <source>
        <strain>PKo</strain>
    </source>
</reference>
<reference key="2">
    <citation type="journal article" date="2011" name="J. Bacteriol.">
        <title>Whole-genome sequences of two Borrelia afzelii and two Borrelia garinii Lyme disease agent isolates.</title>
        <authorList>
            <person name="Casjens S.R."/>
            <person name="Mongodin E.F."/>
            <person name="Qiu W.G."/>
            <person name="Dunn J.J."/>
            <person name="Luft B.J."/>
            <person name="Fraser-Liggett C.M."/>
            <person name="Schutzer S.E."/>
        </authorList>
    </citation>
    <scope>NUCLEOTIDE SEQUENCE [LARGE SCALE GENOMIC DNA]</scope>
    <source>
        <strain>PKo</strain>
    </source>
</reference>
<proteinExistence type="inferred from homology"/>
<feature type="chain" id="PRO_0000264009" description="Peptidyl-tRNA hydrolase">
    <location>
        <begin position="1"/>
        <end position="188"/>
    </location>
</feature>
<feature type="active site" description="Proton acceptor" evidence="1">
    <location>
        <position position="20"/>
    </location>
</feature>
<feature type="binding site" evidence="1">
    <location>
        <position position="15"/>
    </location>
    <ligand>
        <name>tRNA</name>
        <dbReference type="ChEBI" id="CHEBI:17843"/>
    </ligand>
</feature>
<feature type="binding site" evidence="1">
    <location>
        <position position="64"/>
    </location>
    <ligand>
        <name>tRNA</name>
        <dbReference type="ChEBI" id="CHEBI:17843"/>
    </ligand>
</feature>
<feature type="binding site" evidence="1">
    <location>
        <position position="66"/>
    </location>
    <ligand>
        <name>tRNA</name>
        <dbReference type="ChEBI" id="CHEBI:17843"/>
    </ligand>
</feature>
<feature type="binding site" evidence="1">
    <location>
        <position position="112"/>
    </location>
    <ligand>
        <name>tRNA</name>
        <dbReference type="ChEBI" id="CHEBI:17843"/>
    </ligand>
</feature>
<feature type="site" description="Discriminates between blocked and unblocked aminoacyl-tRNA" evidence="1">
    <location>
        <position position="10"/>
    </location>
</feature>
<feature type="site" description="Stabilizes the basic form of H active site to accept a proton" evidence="1">
    <location>
        <position position="91"/>
    </location>
</feature>
<organism>
    <name type="scientific">Borreliella afzelii (strain PKo)</name>
    <name type="common">Borrelia afzelii</name>
    <dbReference type="NCBI Taxonomy" id="390236"/>
    <lineage>
        <taxon>Bacteria</taxon>
        <taxon>Pseudomonadati</taxon>
        <taxon>Spirochaetota</taxon>
        <taxon>Spirochaetia</taxon>
        <taxon>Spirochaetales</taxon>
        <taxon>Borreliaceae</taxon>
        <taxon>Borreliella</taxon>
    </lineage>
</organism>
<evidence type="ECO:0000255" key="1">
    <source>
        <dbReference type="HAMAP-Rule" id="MF_00083"/>
    </source>
</evidence>
<keyword id="KW-0963">Cytoplasm</keyword>
<keyword id="KW-0378">Hydrolase</keyword>
<keyword id="KW-0694">RNA-binding</keyword>
<keyword id="KW-0820">tRNA-binding</keyword>
<comment type="function">
    <text evidence="1">Hydrolyzes ribosome-free peptidyl-tRNAs (with 1 or more amino acids incorporated), which drop off the ribosome during protein synthesis, or as a result of ribosome stalling.</text>
</comment>
<comment type="function">
    <text evidence="1">Catalyzes the release of premature peptidyl moieties from peptidyl-tRNA molecules trapped in stalled 50S ribosomal subunits, and thus maintains levels of free tRNAs and 50S ribosomes.</text>
</comment>
<comment type="catalytic activity">
    <reaction evidence="1">
        <text>an N-acyl-L-alpha-aminoacyl-tRNA + H2O = an N-acyl-L-amino acid + a tRNA + H(+)</text>
        <dbReference type="Rhea" id="RHEA:54448"/>
        <dbReference type="Rhea" id="RHEA-COMP:10123"/>
        <dbReference type="Rhea" id="RHEA-COMP:13883"/>
        <dbReference type="ChEBI" id="CHEBI:15377"/>
        <dbReference type="ChEBI" id="CHEBI:15378"/>
        <dbReference type="ChEBI" id="CHEBI:59874"/>
        <dbReference type="ChEBI" id="CHEBI:78442"/>
        <dbReference type="ChEBI" id="CHEBI:138191"/>
        <dbReference type="EC" id="3.1.1.29"/>
    </reaction>
</comment>
<comment type="subunit">
    <text evidence="1">Monomer.</text>
</comment>
<comment type="subcellular location">
    <subcellularLocation>
        <location evidence="1">Cytoplasm</location>
    </subcellularLocation>
</comment>
<comment type="similarity">
    <text evidence="1">Belongs to the PTH family.</text>
</comment>
<name>PTH_BORAP</name>